<feature type="signal peptide" evidence="1">
    <location>
        <begin position="1"/>
        <end position="19"/>
    </location>
</feature>
<feature type="chain" id="PRO_0000025443" description="Receptor-type tyrosine-protein phosphatase gamma">
    <location>
        <begin position="20"/>
        <end position="1422"/>
    </location>
</feature>
<feature type="topological domain" description="Extracellular" evidence="2">
    <location>
        <begin position="20"/>
        <end position="742"/>
    </location>
</feature>
<feature type="transmembrane region" description="Helical" evidence="2">
    <location>
        <begin position="743"/>
        <end position="768"/>
    </location>
</feature>
<feature type="topological domain" description="Cytoplasmic" evidence="2">
    <location>
        <begin position="769"/>
        <end position="1422"/>
    </location>
</feature>
<feature type="domain" description="Alpha-carbonic anhydrase" evidence="5">
    <location>
        <begin position="58"/>
        <end position="321"/>
    </location>
</feature>
<feature type="domain" description="Fibronectin type-III" evidence="4">
    <location>
        <begin position="349"/>
        <end position="448"/>
    </location>
</feature>
<feature type="domain" description="Tyrosine-protein phosphatase 1" evidence="3">
    <location>
        <begin position="825"/>
        <end position="1096"/>
    </location>
</feature>
<feature type="domain" description="Tyrosine-protein phosphatase 2" evidence="3">
    <location>
        <begin position="1127"/>
        <end position="1387"/>
    </location>
</feature>
<feature type="region of interest" description="Disordered" evidence="7">
    <location>
        <begin position="541"/>
        <end position="708"/>
    </location>
</feature>
<feature type="region of interest" description="Disordered" evidence="7">
    <location>
        <begin position="1396"/>
        <end position="1422"/>
    </location>
</feature>
<feature type="compositionally biased region" description="Basic and acidic residues" evidence="7">
    <location>
        <begin position="565"/>
        <end position="576"/>
    </location>
</feature>
<feature type="compositionally biased region" description="Acidic residues" evidence="7">
    <location>
        <begin position="577"/>
        <end position="602"/>
    </location>
</feature>
<feature type="compositionally biased region" description="Low complexity" evidence="7">
    <location>
        <begin position="612"/>
        <end position="623"/>
    </location>
</feature>
<feature type="compositionally biased region" description="Polar residues" evidence="7">
    <location>
        <begin position="624"/>
        <end position="633"/>
    </location>
</feature>
<feature type="compositionally biased region" description="Polar residues" evidence="7">
    <location>
        <begin position="641"/>
        <end position="652"/>
    </location>
</feature>
<feature type="compositionally biased region" description="Polar residues" evidence="7">
    <location>
        <begin position="666"/>
        <end position="679"/>
    </location>
</feature>
<feature type="compositionally biased region" description="Basic and acidic residues" evidence="7">
    <location>
        <begin position="688"/>
        <end position="708"/>
    </location>
</feature>
<feature type="active site" description="Phosphocysteine intermediate" evidence="3 6">
    <location>
        <position position="1037"/>
    </location>
</feature>
<feature type="binding site" evidence="1">
    <location>
        <position position="1005"/>
    </location>
    <ligand>
        <name>substrate</name>
    </ligand>
</feature>
<feature type="binding site" evidence="1">
    <location>
        <begin position="1037"/>
        <end position="1043"/>
    </location>
    <ligand>
        <name>substrate</name>
    </ligand>
</feature>
<feature type="binding site" evidence="1">
    <location>
        <position position="1081"/>
    </location>
    <ligand>
        <name>substrate</name>
    </ligand>
</feature>
<feature type="site" description="Ancestral active site">
    <location>
        <position position="1328"/>
    </location>
</feature>
<feature type="glycosylation site" description="N-linked (GlcNAc...) asparagine" evidence="2">
    <location>
        <position position="109"/>
    </location>
</feature>
<feature type="glycosylation site" description="N-linked (GlcNAc...) asparagine" evidence="2">
    <location>
        <position position="113"/>
    </location>
</feature>
<feature type="glycosylation site" description="N-linked (GlcNAc...) asparagine" evidence="2">
    <location>
        <position position="156"/>
    </location>
</feature>
<feature type="glycosylation site" description="N-linked (GlcNAc...) asparagine" evidence="2">
    <location>
        <position position="359"/>
    </location>
</feature>
<feature type="glycosylation site" description="N-linked (GlcNAc...) asparagine" evidence="2">
    <location>
        <position position="444"/>
    </location>
</feature>
<feature type="glycosylation site" description="N-linked (GlcNAc...) asparagine" evidence="2">
    <location>
        <position position="620"/>
    </location>
</feature>
<feature type="glycosylation site" description="N-linked (GlcNAc...) asparagine" evidence="2">
    <location>
        <position position="632"/>
    </location>
</feature>
<feature type="glycosylation site" description="N-linked (GlcNAc...) asparagine" evidence="2">
    <location>
        <position position="640"/>
    </location>
</feature>
<feature type="glycosylation site" description="N-linked (GlcNAc...) asparagine" evidence="2">
    <location>
        <position position="728"/>
    </location>
</feature>
<feature type="disulfide bond" evidence="1">
    <location>
        <begin position="78"/>
        <end position="261"/>
    </location>
</feature>
<sequence>MRRLLQPCWWIFFLKITSSVLHDVVCFPALTEGYVGSLHESRHGSSVQIRRRKASGDPYWGYSGTYGPEHWVTSSEKCGGSHQSPIDIVDHQAHVLYEYQELQLDGFDNESSNKTWMKNTGKTVAILLKDDYFVSGAGLPGRFKAEKVEFHWGQSNGSAGSEHSINGKRFPVEMQIYFYNPDDFDSFGTAVLENREVGAMAVFFQVSQRDNSALDPIIRGLKGVVHHEKETFLDPFVLRDLLPTSLGSYYRYTGSLTTPPCSEIVEWIIFRKPVPISYHQLEAFYSIFTTEQQDHVKSVEYLRNNFRPQQRLNNRKVSKSAVKDAWSQDMTDILENPLGTEASKACSTPPVNMKVQPVNRTALLVTWNQPETIYHPPIMNYMISYSWTKNEDEKEKTFTKDSDKDLKAIISHVSPDILYLFRVQAVCRNEMRSDFSQTMLFQANTTRIFEGTRIVKTGVPTASPASSADMAPISSGSSTWTSSGLPFSFVSMATGMGPSSSGSQATVASVVTSTLLAGLGFSGSSISSFPSSVWPTRLPTAAAPTKQAGRPVVATTEPAAASPGPERDSALTKDGEGAEEGEKDEKSESEDGEREHEEEDEKEAEKKEKSRATAAAEARNSTEPSVATASPNWTAEEEGNKTVSGEEPNQNVVPKAGRPEEESFTDADTQPQPLPSTQVPPAFTDELYLEKIPRRPETTRKPLPKDNRFLEEYPSDNKFITINPADKNSSSMATRPSPGKMEWIIPLIVVSALTFVCLILLIAVLVYWRKCFQTAHFYVEDSSSPRVVPNESIPIIPIPDDMEAIPVKQFVKHISELYSNNQHGFSEDFEEVQRCTADMNITAEHSNHPDNKHKNRYINILAYDHSRVKLRPLPGKDSKHSDYINANYVSGYNKAKAYIATQGPLKSTFEDFWRMIWAQHTGIIVMITNLVEKGRRKCDQYWPTENSEEYGNIIVTLKSTNIHACYTVRPLHGQEHKDEKGSERKPKGRQNERTVIQYHYTQWPDMGVPEYALPVLTFVRRSSAARTPHMGPVVVHCSAGVGRTGTYIVIDSMLQQIKDKSTVNVLGFLKHIRTQRNYLVQTEEQYIFIHDALLEAILGKETEVSANQLHSYVNSILIPGIGGKTRLEKQFKLVTQCNAKYVECFSAQKDCNKEKNRNSSVVPSERARVGLAPLPGMKGTDYINASYIMGYYRSNENVITQHPLPHTTKDFWRMIWDHNAQIIVMLPDNQSLAEDEFVYWPSREESMNCEAFTVTLISKDRLCLSNEEQIIIHDFILEATQDDYVLEVRHFQCPKWPNPDAPISSTFELINVIKEEALTRDGPTIVHDEYGAVSAGTLCALTTLSQQLENENAVDVFQVAKMINLMRPGVFTDIEQYQFLYKAMLSLVSTKENGNGPMTLDKNGAVMASDESDPAESMESLV</sequence>
<accession>Q98936</accession>
<name>PTPRG_CHICK</name>
<evidence type="ECO:0000250" key="1"/>
<evidence type="ECO:0000255" key="2"/>
<evidence type="ECO:0000255" key="3">
    <source>
        <dbReference type="PROSITE-ProRule" id="PRU00160"/>
    </source>
</evidence>
<evidence type="ECO:0000255" key="4">
    <source>
        <dbReference type="PROSITE-ProRule" id="PRU00316"/>
    </source>
</evidence>
<evidence type="ECO:0000255" key="5">
    <source>
        <dbReference type="PROSITE-ProRule" id="PRU01134"/>
    </source>
</evidence>
<evidence type="ECO:0000255" key="6">
    <source>
        <dbReference type="PROSITE-ProRule" id="PRU10044"/>
    </source>
</evidence>
<evidence type="ECO:0000256" key="7">
    <source>
        <dbReference type="SAM" id="MobiDB-lite"/>
    </source>
</evidence>
<evidence type="ECO:0000305" key="8"/>
<keyword id="KW-1015">Disulfide bond</keyword>
<keyword id="KW-0325">Glycoprotein</keyword>
<keyword id="KW-0378">Hydrolase</keyword>
<keyword id="KW-0472">Membrane</keyword>
<keyword id="KW-0904">Protein phosphatase</keyword>
<keyword id="KW-1185">Reference proteome</keyword>
<keyword id="KW-0677">Repeat</keyword>
<keyword id="KW-0732">Signal</keyword>
<keyword id="KW-0812">Transmembrane</keyword>
<keyword id="KW-1133">Transmembrane helix</keyword>
<protein>
    <recommendedName>
        <fullName>Receptor-type tyrosine-protein phosphatase gamma</fullName>
        <shortName>Protein-tyrosine phosphatase gamma</shortName>
        <shortName>R-PTP-gamma</shortName>
        <ecNumber>3.1.3.48</ecNumber>
    </recommendedName>
</protein>
<organism>
    <name type="scientific">Gallus gallus</name>
    <name type="common">Chicken</name>
    <dbReference type="NCBI Taxonomy" id="9031"/>
    <lineage>
        <taxon>Eukaryota</taxon>
        <taxon>Metazoa</taxon>
        <taxon>Chordata</taxon>
        <taxon>Craniata</taxon>
        <taxon>Vertebrata</taxon>
        <taxon>Euteleostomi</taxon>
        <taxon>Archelosauria</taxon>
        <taxon>Archosauria</taxon>
        <taxon>Dinosauria</taxon>
        <taxon>Saurischia</taxon>
        <taxon>Theropoda</taxon>
        <taxon>Coelurosauria</taxon>
        <taxon>Aves</taxon>
        <taxon>Neognathae</taxon>
        <taxon>Galloanserae</taxon>
        <taxon>Galliformes</taxon>
        <taxon>Phasianidae</taxon>
        <taxon>Phasianinae</taxon>
        <taxon>Gallus</taxon>
    </lineage>
</organism>
<proteinExistence type="evidence at transcript level"/>
<comment type="catalytic activity">
    <reaction evidence="6">
        <text>O-phospho-L-tyrosyl-[protein] + H2O = L-tyrosyl-[protein] + phosphate</text>
        <dbReference type="Rhea" id="RHEA:10684"/>
        <dbReference type="Rhea" id="RHEA-COMP:10136"/>
        <dbReference type="Rhea" id="RHEA-COMP:20101"/>
        <dbReference type="ChEBI" id="CHEBI:15377"/>
        <dbReference type="ChEBI" id="CHEBI:43474"/>
        <dbReference type="ChEBI" id="CHEBI:46858"/>
        <dbReference type="ChEBI" id="CHEBI:61978"/>
        <dbReference type="EC" id="3.1.3.48"/>
    </reaction>
</comment>
<comment type="subcellular location">
    <subcellularLocation>
        <location evidence="8">Membrane</location>
        <topology evidence="8">Single-pass type I membrane protein</topology>
    </subcellularLocation>
</comment>
<comment type="similarity">
    <text evidence="8">Belongs to the protein-tyrosine phosphatase family. Receptor class 5 subfamily.</text>
</comment>
<gene>
    <name type="primary">PTPRG</name>
</gene>
<reference key="1">
    <citation type="submission" date="1995-10" db="EMBL/GenBank/DDBJ databases">
        <authorList>
            <person name="Qinghua X."/>
            <person name="Xiaojun G."/>
            <person name="Cong S."/>
            <person name="Zong S.M."/>
            <person name="Jong Y.J."/>
            <person name="Chan J."/>
            <person name="Wang L.-H."/>
        </authorList>
    </citation>
    <scope>NUCLEOTIDE SEQUENCE [MRNA]</scope>
    <source>
        <tissue>Brain</tissue>
        <tissue>Kidney</tissue>
    </source>
</reference>
<dbReference type="EC" id="3.1.3.48"/>
<dbReference type="EMBL" id="U38349">
    <property type="protein sequence ID" value="AAB16910.1"/>
    <property type="molecule type" value="mRNA"/>
</dbReference>
<dbReference type="PIR" id="T42636">
    <property type="entry name" value="T42636"/>
</dbReference>
<dbReference type="SMR" id="Q98936"/>
<dbReference type="FunCoup" id="Q98936">
    <property type="interactions" value="646"/>
</dbReference>
<dbReference type="STRING" id="9031.ENSGALP00000043685"/>
<dbReference type="GlyCosmos" id="Q98936">
    <property type="glycosylation" value="9 sites, No reported glycans"/>
</dbReference>
<dbReference type="GlyGen" id="Q98936">
    <property type="glycosylation" value="9 sites"/>
</dbReference>
<dbReference type="PaxDb" id="9031-ENSGALP00000011605"/>
<dbReference type="VEuPathDB" id="HostDB:geneid_374208"/>
<dbReference type="eggNOG" id="KOG0382">
    <property type="taxonomic scope" value="Eukaryota"/>
</dbReference>
<dbReference type="eggNOG" id="KOG0789">
    <property type="taxonomic scope" value="Eukaryota"/>
</dbReference>
<dbReference type="InParanoid" id="Q98936"/>
<dbReference type="OrthoDB" id="6022401at2759"/>
<dbReference type="PhylomeDB" id="Q98936"/>
<dbReference type="Proteomes" id="UP000000539">
    <property type="component" value="Unassembled WGS sequence"/>
</dbReference>
<dbReference type="GO" id="GO:0016020">
    <property type="term" value="C:membrane"/>
    <property type="evidence" value="ECO:0007669"/>
    <property type="project" value="UniProtKB-SubCell"/>
</dbReference>
<dbReference type="GO" id="GO:0004725">
    <property type="term" value="F:protein tyrosine phosphatase activity"/>
    <property type="evidence" value="ECO:0000318"/>
    <property type="project" value="GO_Central"/>
</dbReference>
<dbReference type="GO" id="GO:0031175">
    <property type="term" value="P:neuron projection development"/>
    <property type="evidence" value="ECO:0000318"/>
    <property type="project" value="GO_Central"/>
</dbReference>
<dbReference type="GO" id="GO:0007165">
    <property type="term" value="P:signal transduction"/>
    <property type="evidence" value="ECO:0000318"/>
    <property type="project" value="GO_Central"/>
</dbReference>
<dbReference type="CDD" id="cd03122">
    <property type="entry name" value="alpha_CARP_receptor_like"/>
    <property type="match status" value="1"/>
</dbReference>
<dbReference type="CDD" id="cd00063">
    <property type="entry name" value="FN3"/>
    <property type="match status" value="1"/>
</dbReference>
<dbReference type="CDD" id="cd17670">
    <property type="entry name" value="R-PTP-G-2"/>
    <property type="match status" value="1"/>
</dbReference>
<dbReference type="CDD" id="cd17667">
    <property type="entry name" value="R-PTPc-G-1"/>
    <property type="match status" value="1"/>
</dbReference>
<dbReference type="FunFam" id="3.10.200.10:FF:000005">
    <property type="entry name" value="receptor-type tyrosine-protein phosphatase gamma isoform X1"/>
    <property type="match status" value="1"/>
</dbReference>
<dbReference type="FunFam" id="3.90.190.10:FF:000016">
    <property type="entry name" value="receptor-type tyrosine-protein phosphatase gamma isoform X1"/>
    <property type="match status" value="1"/>
</dbReference>
<dbReference type="FunFam" id="2.60.40.10:FF:000255">
    <property type="entry name" value="receptor-type tyrosine-protein phosphatase gamma isoform X2"/>
    <property type="match status" value="1"/>
</dbReference>
<dbReference type="FunFam" id="3.90.190.10:FF:000013">
    <property type="entry name" value="receptor-type tyrosine-protein phosphatase zeta isoform X1"/>
    <property type="match status" value="1"/>
</dbReference>
<dbReference type="Gene3D" id="3.10.200.10">
    <property type="entry name" value="Alpha carbonic anhydrase"/>
    <property type="match status" value="1"/>
</dbReference>
<dbReference type="Gene3D" id="2.60.40.10">
    <property type="entry name" value="Immunoglobulins"/>
    <property type="match status" value="1"/>
</dbReference>
<dbReference type="Gene3D" id="3.90.190.10">
    <property type="entry name" value="Protein tyrosine phosphatase superfamily"/>
    <property type="match status" value="2"/>
</dbReference>
<dbReference type="InterPro" id="IPR041887">
    <property type="entry name" value="Alpha_CARP_receptor-type"/>
</dbReference>
<dbReference type="InterPro" id="IPR001148">
    <property type="entry name" value="CA_dom"/>
</dbReference>
<dbReference type="InterPro" id="IPR036398">
    <property type="entry name" value="CA_dom_sf"/>
</dbReference>
<dbReference type="InterPro" id="IPR003961">
    <property type="entry name" value="FN3_dom"/>
</dbReference>
<dbReference type="InterPro" id="IPR036116">
    <property type="entry name" value="FN3_sf"/>
</dbReference>
<dbReference type="InterPro" id="IPR013783">
    <property type="entry name" value="Ig-like_fold"/>
</dbReference>
<dbReference type="InterPro" id="IPR029021">
    <property type="entry name" value="Prot-tyrosine_phosphatase-like"/>
</dbReference>
<dbReference type="InterPro" id="IPR050348">
    <property type="entry name" value="Protein-Tyr_Phosphatase"/>
</dbReference>
<dbReference type="InterPro" id="IPR000242">
    <property type="entry name" value="PTP_cat"/>
</dbReference>
<dbReference type="InterPro" id="IPR016130">
    <property type="entry name" value="Tyr_Pase_AS"/>
</dbReference>
<dbReference type="InterPro" id="IPR003595">
    <property type="entry name" value="Tyr_Pase_cat"/>
</dbReference>
<dbReference type="InterPro" id="IPR000387">
    <property type="entry name" value="Tyr_Pase_dom"/>
</dbReference>
<dbReference type="PANTHER" id="PTHR19134">
    <property type="entry name" value="RECEPTOR-TYPE TYROSINE-PROTEIN PHOSPHATASE"/>
    <property type="match status" value="1"/>
</dbReference>
<dbReference type="PANTHER" id="PTHR19134:SF468">
    <property type="entry name" value="RECEPTOR-TYPE TYROSINE-PROTEIN PHOSPHATASE GAMMA"/>
    <property type="match status" value="1"/>
</dbReference>
<dbReference type="Pfam" id="PF00194">
    <property type="entry name" value="Carb_anhydrase"/>
    <property type="match status" value="1"/>
</dbReference>
<dbReference type="Pfam" id="PF00041">
    <property type="entry name" value="fn3"/>
    <property type="match status" value="1"/>
</dbReference>
<dbReference type="Pfam" id="PF00102">
    <property type="entry name" value="Y_phosphatase"/>
    <property type="match status" value="2"/>
</dbReference>
<dbReference type="PRINTS" id="PR00700">
    <property type="entry name" value="PRTYPHPHTASE"/>
</dbReference>
<dbReference type="SMART" id="SM01057">
    <property type="entry name" value="Carb_anhydrase"/>
    <property type="match status" value="1"/>
</dbReference>
<dbReference type="SMART" id="SM00060">
    <property type="entry name" value="FN3"/>
    <property type="match status" value="1"/>
</dbReference>
<dbReference type="SMART" id="SM00194">
    <property type="entry name" value="PTPc"/>
    <property type="match status" value="2"/>
</dbReference>
<dbReference type="SMART" id="SM00404">
    <property type="entry name" value="PTPc_motif"/>
    <property type="match status" value="2"/>
</dbReference>
<dbReference type="SUPFAM" id="SSF52799">
    <property type="entry name" value="(Phosphotyrosine protein) phosphatases II"/>
    <property type="match status" value="2"/>
</dbReference>
<dbReference type="SUPFAM" id="SSF51069">
    <property type="entry name" value="Carbonic anhydrase"/>
    <property type="match status" value="1"/>
</dbReference>
<dbReference type="SUPFAM" id="SSF49265">
    <property type="entry name" value="Fibronectin type III"/>
    <property type="match status" value="1"/>
</dbReference>
<dbReference type="PROSITE" id="PS51144">
    <property type="entry name" value="ALPHA_CA_2"/>
    <property type="match status" value="1"/>
</dbReference>
<dbReference type="PROSITE" id="PS50853">
    <property type="entry name" value="FN3"/>
    <property type="match status" value="1"/>
</dbReference>
<dbReference type="PROSITE" id="PS00383">
    <property type="entry name" value="TYR_PHOSPHATASE_1"/>
    <property type="match status" value="1"/>
</dbReference>
<dbReference type="PROSITE" id="PS50056">
    <property type="entry name" value="TYR_PHOSPHATASE_2"/>
    <property type="match status" value="2"/>
</dbReference>
<dbReference type="PROSITE" id="PS50055">
    <property type="entry name" value="TYR_PHOSPHATASE_PTP"/>
    <property type="match status" value="2"/>
</dbReference>